<dbReference type="EMBL" id="M62848">
    <property type="protein sequence ID" value="AAA30004.1"/>
    <property type="status" value="ALT_SEQ"/>
    <property type="molecule type" value="Genomic_DNA"/>
</dbReference>
<dbReference type="PIR" id="A40394">
    <property type="entry name" value="A40394"/>
</dbReference>
<dbReference type="SMR" id="Q03975"/>
<dbReference type="OrthoDB" id="26525at2759"/>
<dbReference type="GO" id="GO:0005509">
    <property type="term" value="F:calcium ion binding"/>
    <property type="evidence" value="ECO:0007669"/>
    <property type="project" value="InterPro"/>
</dbReference>
<dbReference type="CDD" id="cd00051">
    <property type="entry name" value="EFh"/>
    <property type="match status" value="3"/>
</dbReference>
<dbReference type="FunFam" id="1.10.238.10:FF:000003">
    <property type="entry name" value="Calmodulin A"/>
    <property type="match status" value="1"/>
</dbReference>
<dbReference type="Gene3D" id="1.10.238.10">
    <property type="entry name" value="EF-hand"/>
    <property type="match status" value="3"/>
</dbReference>
<dbReference type="InterPro" id="IPR011992">
    <property type="entry name" value="EF-hand-dom_pair"/>
</dbReference>
<dbReference type="InterPro" id="IPR018247">
    <property type="entry name" value="EF_Hand_1_Ca_BS"/>
</dbReference>
<dbReference type="InterPro" id="IPR002048">
    <property type="entry name" value="EF_hand_dom"/>
</dbReference>
<dbReference type="PANTHER" id="PTHR45942">
    <property type="entry name" value="PROTEIN PHOSPATASE 3 REGULATORY SUBUNIT B ALPHA ISOFORM TYPE 1"/>
    <property type="match status" value="1"/>
</dbReference>
<dbReference type="Pfam" id="PF13499">
    <property type="entry name" value="EF-hand_7"/>
    <property type="match status" value="3"/>
</dbReference>
<dbReference type="SMART" id="SM00054">
    <property type="entry name" value="EFh"/>
    <property type="match status" value="6"/>
</dbReference>
<dbReference type="SUPFAM" id="SSF47473">
    <property type="entry name" value="EF-hand"/>
    <property type="match status" value="2"/>
</dbReference>
<dbReference type="PROSITE" id="PS00018">
    <property type="entry name" value="EF_HAND_1"/>
    <property type="match status" value="6"/>
</dbReference>
<dbReference type="PROSITE" id="PS50222">
    <property type="entry name" value="EF_HAND_2"/>
    <property type="match status" value="7"/>
</dbReference>
<organism>
    <name type="scientific">Lytechinus pictus</name>
    <name type="common">Painted sea urchin</name>
    <dbReference type="NCBI Taxonomy" id="7653"/>
    <lineage>
        <taxon>Eukaryota</taxon>
        <taxon>Metazoa</taxon>
        <taxon>Echinodermata</taxon>
        <taxon>Eleutherozoa</taxon>
        <taxon>Echinozoa</taxon>
        <taxon>Echinoidea</taxon>
        <taxon>Euechinoidea</taxon>
        <taxon>Echinacea</taxon>
        <taxon>Temnopleuroida</taxon>
        <taxon>Toxopneustidae</taxon>
        <taxon>Lytechinus</taxon>
    </lineage>
</organism>
<evidence type="ECO:0000255" key="1">
    <source>
        <dbReference type="PROSITE-ProRule" id="PRU00448"/>
    </source>
</evidence>
<accession>Q03975</accession>
<protein>
    <recommendedName>
        <fullName>Calcium-binding protein LPS1-beta</fullName>
    </recommendedName>
</protein>
<sequence>MSDRMAKFKAGMPKEVIDAMKQEFKDNYDTNKDGTVSCAELAKLMDCPEEEAQRIITGVDVNCDGRMQFDEFLLYMEGYTKERLYSSDEIKQMFDDLDKDGNGRISPDELSKGVGEISTKLVEGMANKLIQEADKDGDGHVNMEEFVDTLVAKLPLCFKKCFHEDFDKNGDGSLTNAEMSQLLNRNLPGQYSEELINEMISRVDLNGDGRVQFGEFLMHAQNLSKDDIKNQFMAIDKDKNGKI</sequence>
<proteinExistence type="evidence at transcript level"/>
<keyword id="KW-0106">Calcium</keyword>
<keyword id="KW-0479">Metal-binding</keyword>
<keyword id="KW-0677">Repeat</keyword>
<reference key="1">
    <citation type="journal article" date="1991" name="J. Biol. Chem.">
        <title>Structure and promoter activity of the LpS1 genes of Lytechinus pictus. Duplicated exons account for LpS1 proteins with eight calcium binding domains.</title>
        <authorList>
            <person name="Xiang M."/>
            <person name="Ge T."/>
            <person name="Tomlinson C.R."/>
            <person name="Klein W.H."/>
        </authorList>
    </citation>
    <scope>NUCLEOTIDE SEQUENCE [GENOMIC DNA]</scope>
    <source>
        <tissue>Sperm</tissue>
    </source>
</reference>
<comment type="function">
    <text>Calcium-binding protein involved in larval development and metamorphosis. Likely to function as calcium buffers mediating the transport of calcium from the sea water to the blastocoel where calcium is required for skeleton formation.</text>
</comment>
<comment type="tissue specificity">
    <text>Aboral ectoderm, a squamous epithelium covering the surface of the late stage embryo and larva.</text>
</comment>
<comment type="developmental stage">
    <text>Activated early in development in aboral ectoderm cells.</text>
</comment>
<feature type="chain" id="PRO_0000073650" description="Calcium-binding protein LPS1-beta">
    <location>
        <begin position="1"/>
        <end position="243" status="greater than"/>
    </location>
</feature>
<feature type="domain" description="EF-hand 1" evidence="1">
    <location>
        <begin position="15"/>
        <end position="49"/>
    </location>
</feature>
<feature type="domain" description="EF-hand 2" evidence="1">
    <location>
        <begin position="47"/>
        <end position="82"/>
    </location>
</feature>
<feature type="domain" description="EF-hand 3" evidence="1">
    <location>
        <begin position="85"/>
        <end position="120"/>
    </location>
</feature>
<feature type="domain" description="EF-hand 4" evidence="1">
    <location>
        <begin position="121"/>
        <end position="156"/>
    </location>
</feature>
<feature type="domain" description="EF-hand 5" evidence="1">
    <location>
        <begin position="157"/>
        <end position="189"/>
    </location>
</feature>
<feature type="domain" description="EF-hand 6" evidence="1">
    <location>
        <begin position="191"/>
        <end position="226"/>
    </location>
</feature>
<feature type="domain" description="EF-hand 7" evidence="1">
    <location>
        <begin position="227"/>
        <end position="243" status="greater than"/>
    </location>
</feature>
<feature type="binding site" evidence="1">
    <location>
        <position position="29"/>
    </location>
    <ligand>
        <name>Ca(2+)</name>
        <dbReference type="ChEBI" id="CHEBI:29108"/>
        <label>1</label>
    </ligand>
</feature>
<feature type="binding site" evidence="1">
    <location>
        <position position="31"/>
    </location>
    <ligand>
        <name>Ca(2+)</name>
        <dbReference type="ChEBI" id="CHEBI:29108"/>
        <label>1</label>
    </ligand>
</feature>
<feature type="binding site" evidence="1">
    <location>
        <position position="33"/>
    </location>
    <ligand>
        <name>Ca(2+)</name>
        <dbReference type="ChEBI" id="CHEBI:29108"/>
        <label>1</label>
    </ligand>
</feature>
<feature type="binding site" evidence="1">
    <location>
        <position position="35"/>
    </location>
    <ligand>
        <name>Ca(2+)</name>
        <dbReference type="ChEBI" id="CHEBI:29108"/>
        <label>1</label>
    </ligand>
</feature>
<feature type="binding site" evidence="1">
    <location>
        <position position="40"/>
    </location>
    <ligand>
        <name>Ca(2+)</name>
        <dbReference type="ChEBI" id="CHEBI:29108"/>
        <label>1</label>
    </ligand>
</feature>
<feature type="binding site" evidence="1">
    <location>
        <position position="60"/>
    </location>
    <ligand>
        <name>Ca(2+)</name>
        <dbReference type="ChEBI" id="CHEBI:29108"/>
        <label>2</label>
    </ligand>
</feature>
<feature type="binding site" evidence="1">
    <location>
        <position position="62"/>
    </location>
    <ligand>
        <name>Ca(2+)</name>
        <dbReference type="ChEBI" id="CHEBI:29108"/>
        <label>2</label>
    </ligand>
</feature>
<feature type="binding site" evidence="1">
    <location>
        <position position="64"/>
    </location>
    <ligand>
        <name>Ca(2+)</name>
        <dbReference type="ChEBI" id="CHEBI:29108"/>
        <label>2</label>
    </ligand>
</feature>
<feature type="binding site" evidence="1">
    <location>
        <position position="66"/>
    </location>
    <ligand>
        <name>Ca(2+)</name>
        <dbReference type="ChEBI" id="CHEBI:29108"/>
        <label>2</label>
    </ligand>
</feature>
<feature type="binding site" evidence="1">
    <location>
        <position position="71"/>
    </location>
    <ligand>
        <name>Ca(2+)</name>
        <dbReference type="ChEBI" id="CHEBI:29108"/>
        <label>2</label>
    </ligand>
</feature>
<feature type="binding site" evidence="1">
    <location>
        <position position="98"/>
    </location>
    <ligand>
        <name>Ca(2+)</name>
        <dbReference type="ChEBI" id="CHEBI:29108"/>
        <label>3</label>
    </ligand>
</feature>
<feature type="binding site" evidence="1">
    <location>
        <position position="100"/>
    </location>
    <ligand>
        <name>Ca(2+)</name>
        <dbReference type="ChEBI" id="CHEBI:29108"/>
        <label>3</label>
    </ligand>
</feature>
<feature type="binding site" evidence="1">
    <location>
        <position position="102"/>
    </location>
    <ligand>
        <name>Ca(2+)</name>
        <dbReference type="ChEBI" id="CHEBI:29108"/>
        <label>3</label>
    </ligand>
</feature>
<feature type="binding site" evidence="1">
    <location>
        <position position="104"/>
    </location>
    <ligand>
        <name>Ca(2+)</name>
        <dbReference type="ChEBI" id="CHEBI:29108"/>
        <label>3</label>
    </ligand>
</feature>
<feature type="binding site" evidence="1">
    <location>
        <position position="109"/>
    </location>
    <ligand>
        <name>Ca(2+)</name>
        <dbReference type="ChEBI" id="CHEBI:29108"/>
        <label>3</label>
    </ligand>
</feature>
<feature type="binding site" evidence="1">
    <location>
        <position position="134"/>
    </location>
    <ligand>
        <name>Ca(2+)</name>
        <dbReference type="ChEBI" id="CHEBI:29108"/>
        <label>4</label>
    </ligand>
</feature>
<feature type="binding site" evidence="1">
    <location>
        <position position="136"/>
    </location>
    <ligand>
        <name>Ca(2+)</name>
        <dbReference type="ChEBI" id="CHEBI:29108"/>
        <label>4</label>
    </ligand>
</feature>
<feature type="binding site" evidence="1">
    <location>
        <position position="138"/>
    </location>
    <ligand>
        <name>Ca(2+)</name>
        <dbReference type="ChEBI" id="CHEBI:29108"/>
        <label>4</label>
    </ligand>
</feature>
<feature type="binding site" evidence="1">
    <location>
        <position position="140"/>
    </location>
    <ligand>
        <name>Ca(2+)</name>
        <dbReference type="ChEBI" id="CHEBI:29108"/>
        <label>4</label>
    </ligand>
</feature>
<feature type="binding site" evidence="1">
    <location>
        <position position="145"/>
    </location>
    <ligand>
        <name>Ca(2+)</name>
        <dbReference type="ChEBI" id="CHEBI:29108"/>
        <label>4</label>
    </ligand>
</feature>
<feature type="binding site" evidence="1">
    <location>
        <position position="167"/>
    </location>
    <ligand>
        <name>Ca(2+)</name>
        <dbReference type="ChEBI" id="CHEBI:29108"/>
        <label>5</label>
    </ligand>
</feature>
<feature type="binding site" evidence="1">
    <location>
        <position position="169"/>
    </location>
    <ligand>
        <name>Ca(2+)</name>
        <dbReference type="ChEBI" id="CHEBI:29108"/>
        <label>5</label>
    </ligand>
</feature>
<feature type="binding site" evidence="1">
    <location>
        <position position="171"/>
    </location>
    <ligand>
        <name>Ca(2+)</name>
        <dbReference type="ChEBI" id="CHEBI:29108"/>
        <label>5</label>
    </ligand>
</feature>
<feature type="binding site" evidence="1">
    <location>
        <position position="173"/>
    </location>
    <ligand>
        <name>Ca(2+)</name>
        <dbReference type="ChEBI" id="CHEBI:29108"/>
        <label>5</label>
    </ligand>
</feature>
<feature type="binding site" evidence="1">
    <location>
        <position position="178"/>
    </location>
    <ligand>
        <name>Ca(2+)</name>
        <dbReference type="ChEBI" id="CHEBI:29108"/>
        <label>5</label>
    </ligand>
</feature>
<feature type="binding site" evidence="1">
    <location>
        <position position="204"/>
    </location>
    <ligand>
        <name>Ca(2+)</name>
        <dbReference type="ChEBI" id="CHEBI:29108"/>
        <label>6</label>
    </ligand>
</feature>
<feature type="binding site" evidence="1">
    <location>
        <position position="206"/>
    </location>
    <ligand>
        <name>Ca(2+)</name>
        <dbReference type="ChEBI" id="CHEBI:29108"/>
        <label>6</label>
    </ligand>
</feature>
<feature type="binding site" evidence="1">
    <location>
        <position position="208"/>
    </location>
    <ligand>
        <name>Ca(2+)</name>
        <dbReference type="ChEBI" id="CHEBI:29108"/>
        <label>6</label>
    </ligand>
</feature>
<feature type="binding site" evidence="1">
    <location>
        <position position="210"/>
    </location>
    <ligand>
        <name>Ca(2+)</name>
        <dbReference type="ChEBI" id="CHEBI:29108"/>
        <label>6</label>
    </ligand>
</feature>
<feature type="binding site" evidence="1">
    <location>
        <position position="215"/>
    </location>
    <ligand>
        <name>Ca(2+)</name>
        <dbReference type="ChEBI" id="CHEBI:29108"/>
        <label>6</label>
    </ligand>
</feature>
<feature type="non-terminal residue">
    <location>
        <position position="243"/>
    </location>
</feature>
<name>LPS1B_LYTPI</name>